<evidence type="ECO:0000255" key="1"/>
<evidence type="ECO:0000305" key="2"/>
<evidence type="ECO:0007829" key="3">
    <source>
        <dbReference type="PDB" id="6IN9"/>
    </source>
</evidence>
<evidence type="ECO:0007829" key="4">
    <source>
        <dbReference type="PDB" id="6JAU"/>
    </source>
</evidence>
<gene>
    <name type="primary">mucB</name>
    <name type="synonym">algN</name>
    <name type="ordered locus">PA0764</name>
</gene>
<proteinExistence type="evidence at protein level"/>
<accession>P38108</accession>
<organism>
    <name type="scientific">Pseudomonas aeruginosa (strain ATCC 15692 / DSM 22644 / CIP 104116 / JCM 14847 / LMG 12228 / 1C / PRS 101 / PAO1)</name>
    <dbReference type="NCBI Taxonomy" id="208964"/>
    <lineage>
        <taxon>Bacteria</taxon>
        <taxon>Pseudomonadati</taxon>
        <taxon>Pseudomonadota</taxon>
        <taxon>Gammaproteobacteria</taxon>
        <taxon>Pseudomonadales</taxon>
        <taxon>Pseudomonadaceae</taxon>
        <taxon>Pseudomonas</taxon>
    </lineage>
</organism>
<name>MUCB_PSEAE</name>
<dbReference type="EMBL" id="L09122">
    <property type="protein sequence ID" value="AAA25702.1"/>
    <property type="molecule type" value="Genomic_DNA"/>
</dbReference>
<dbReference type="EMBL" id="L14760">
    <property type="protein sequence ID" value="AAA87630.1"/>
    <property type="molecule type" value="Genomic_DNA"/>
</dbReference>
<dbReference type="EMBL" id="L14761">
    <property type="protein sequence ID" value="AAA87633.1"/>
    <property type="molecule type" value="Genomic_DNA"/>
</dbReference>
<dbReference type="EMBL" id="U49151">
    <property type="protein sequence ID" value="AAC43716.1"/>
    <property type="molecule type" value="Genomic_DNA"/>
</dbReference>
<dbReference type="EMBL" id="AE004091">
    <property type="protein sequence ID" value="AAG04153.1"/>
    <property type="molecule type" value="Genomic_DNA"/>
</dbReference>
<dbReference type="PIR" id="A47064">
    <property type="entry name" value="A47064"/>
</dbReference>
<dbReference type="RefSeq" id="NP_249455.1">
    <property type="nucleotide sequence ID" value="NC_002516.2"/>
</dbReference>
<dbReference type="RefSeq" id="WP_003101960.1">
    <property type="nucleotide sequence ID" value="NZ_QZGE01000007.1"/>
</dbReference>
<dbReference type="PDB" id="6IN8">
    <property type="method" value="X-ray"/>
    <property type="resolution" value="2.20 A"/>
    <property type="chains" value="A=22-316"/>
</dbReference>
<dbReference type="PDB" id="6IN9">
    <property type="method" value="X-ray"/>
    <property type="resolution" value="1.80 A"/>
    <property type="chains" value="A/B=22-316"/>
</dbReference>
<dbReference type="PDB" id="6JAU">
    <property type="method" value="X-ray"/>
    <property type="resolution" value="1.91 A"/>
    <property type="chains" value="A=22-316"/>
</dbReference>
<dbReference type="PDBsum" id="6IN8"/>
<dbReference type="PDBsum" id="6IN9"/>
<dbReference type="PDBsum" id="6JAU"/>
<dbReference type="SMR" id="P38108"/>
<dbReference type="FunCoup" id="P38108">
    <property type="interactions" value="49"/>
</dbReference>
<dbReference type="IntAct" id="P38108">
    <property type="interactions" value="1"/>
</dbReference>
<dbReference type="STRING" id="208964.PA0764"/>
<dbReference type="PaxDb" id="208964-PA0764"/>
<dbReference type="GeneID" id="882064"/>
<dbReference type="KEGG" id="pae:PA0764"/>
<dbReference type="PATRIC" id="fig|208964.12.peg.794"/>
<dbReference type="PseudoCAP" id="PA0764"/>
<dbReference type="HOGENOM" id="CLU_054710_0_1_6"/>
<dbReference type="InParanoid" id="P38108"/>
<dbReference type="OrthoDB" id="7067274at2"/>
<dbReference type="PhylomeDB" id="P38108"/>
<dbReference type="BioCyc" id="PAER208964:G1FZ6-777-MONOMER"/>
<dbReference type="Proteomes" id="UP000002438">
    <property type="component" value="Chromosome"/>
</dbReference>
<dbReference type="GO" id="GO:0030288">
    <property type="term" value="C:outer membrane-bounded periplasmic space"/>
    <property type="evidence" value="ECO:0000318"/>
    <property type="project" value="GO_Central"/>
</dbReference>
<dbReference type="GO" id="GO:0045152">
    <property type="term" value="F:antisigma factor binding"/>
    <property type="evidence" value="ECO:0000318"/>
    <property type="project" value="GO_Central"/>
</dbReference>
<dbReference type="GO" id="GO:0042121">
    <property type="term" value="P:alginic acid biosynthetic process"/>
    <property type="evidence" value="ECO:0007669"/>
    <property type="project" value="UniProtKB-KW"/>
</dbReference>
<dbReference type="GO" id="GO:0032885">
    <property type="term" value="P:regulation of polysaccharide biosynthetic process"/>
    <property type="evidence" value="ECO:0000315"/>
    <property type="project" value="PseudoCAP"/>
</dbReference>
<dbReference type="CDD" id="cd16327">
    <property type="entry name" value="RseB"/>
    <property type="match status" value="1"/>
</dbReference>
<dbReference type="Gene3D" id="2.50.20.10">
    <property type="entry name" value="Lipoprotein localisation LolA/LolB/LppX"/>
    <property type="match status" value="1"/>
</dbReference>
<dbReference type="Gene3D" id="3.30.200.100">
    <property type="entry name" value="MucB/RseB, C-terminal domain"/>
    <property type="match status" value="1"/>
</dbReference>
<dbReference type="InterPro" id="IPR033436">
    <property type="entry name" value="MucB/RseB_C"/>
</dbReference>
<dbReference type="InterPro" id="IPR038484">
    <property type="entry name" value="MucB/RseB_C_sf"/>
</dbReference>
<dbReference type="InterPro" id="IPR033434">
    <property type="entry name" value="MucB/RseB_N"/>
</dbReference>
<dbReference type="InterPro" id="IPR005588">
    <property type="entry name" value="MucB_RseB"/>
</dbReference>
<dbReference type="PANTHER" id="PTHR38782">
    <property type="match status" value="1"/>
</dbReference>
<dbReference type="PANTHER" id="PTHR38782:SF1">
    <property type="entry name" value="SIGMA-E FACTOR REGULATORY PROTEIN RSEB"/>
    <property type="match status" value="1"/>
</dbReference>
<dbReference type="Pfam" id="PF03888">
    <property type="entry name" value="MucB_RseB"/>
    <property type="match status" value="1"/>
</dbReference>
<dbReference type="Pfam" id="PF17188">
    <property type="entry name" value="MucB_RseB_C"/>
    <property type="match status" value="1"/>
</dbReference>
<dbReference type="PIRSF" id="PIRSF005427">
    <property type="entry name" value="RseB"/>
    <property type="match status" value="1"/>
</dbReference>
<protein>
    <recommendedName>
        <fullName>Sigma factor AlgU regulatory protein MucB</fullName>
    </recommendedName>
</protein>
<keyword id="KW-0002">3D-structure</keyword>
<keyword id="KW-0016">Alginate biosynthesis</keyword>
<keyword id="KW-0574">Periplasm</keyword>
<keyword id="KW-1185">Reference proteome</keyword>
<keyword id="KW-0732">Signal</keyword>
<comment type="function">
    <text>Negative regulator of the sigma factor AlgU. Plays a role in the differentiation of P.aeruginosa into the alginate-producing form. Inactivation of mucB causes conversion to mucoidy.</text>
</comment>
<comment type="interaction">
    <interactant intactId="EBI-6406975">
        <id>P38108</id>
    </interactant>
    <interactant intactId="EBI-6406981">
        <id>P38107</id>
        <label>mucA</label>
    </interactant>
    <organismsDiffer>false</organismsDiffer>
    <experiments>4</experiments>
</comment>
<comment type="subcellular location">
    <subcellularLocation>
        <location evidence="2">Periplasm</location>
    </subcellularLocation>
</comment>
<comment type="similarity">
    <text evidence="2">Belongs to the RseB family.</text>
</comment>
<reference key="1">
    <citation type="journal article" date="1993" name="Mol. Microbiol.">
        <title>Differentiation of Pseudomonas aeruginosa into the alginate-producing form: inactivation of mucB causes conversion to mucoidy.</title>
        <authorList>
            <person name="Martin D.W."/>
            <person name="Schurr M.J."/>
            <person name="Mudd M.H."/>
            <person name="Deretic V."/>
        </authorList>
    </citation>
    <scope>NUCLEOTIDE SEQUENCE [GENOMIC DNA]</scope>
    <source>
        <strain>ATCC 15692 / DSM 22644 / CIP 104116 / JCM 14847 / LMG 12228 / 1C / PRS 101 / PAO1</strain>
    </source>
</reference>
<reference key="2">
    <citation type="journal article" date="1993" name="Proc. Natl. Acad. Sci. U.S.A.">
        <title>Mechanism of conversion to mucoidy in Pseudomonas aeruginosa infecting cystic fibrosis patients.</title>
        <authorList>
            <person name="Martin D.W."/>
            <person name="Schurr M.J."/>
            <person name="Mudd M.H."/>
            <person name="Govan J.R.W."/>
            <person name="Holloway B.W."/>
            <person name="Deretic V."/>
        </authorList>
    </citation>
    <scope>NUCLEOTIDE SEQUENCE [GENOMIC DNA]</scope>
    <source>
        <strain>PAO381</strain>
        <strain>PAO568</strain>
    </source>
</reference>
<reference key="3">
    <citation type="journal article" date="1993" name="J. Bacteriol.">
        <title>A mutation in algN permits trans activation of alginate production by algT in Pseudomonas species.</title>
        <authorList>
            <person name="Goldberg J.B."/>
            <person name="Gorman W.L."/>
            <person name="Flynn J.L."/>
            <person name="Ohman D.E."/>
        </authorList>
    </citation>
    <scope>NUCLEOTIDE SEQUENCE [GENOMIC DNA]</scope>
</reference>
<reference key="4">
    <citation type="journal article" date="2000" name="Nature">
        <title>Complete genome sequence of Pseudomonas aeruginosa PAO1, an opportunistic pathogen.</title>
        <authorList>
            <person name="Stover C.K."/>
            <person name="Pham X.-Q.T."/>
            <person name="Erwin A.L."/>
            <person name="Mizoguchi S.D."/>
            <person name="Warrener P."/>
            <person name="Hickey M.J."/>
            <person name="Brinkman F.S.L."/>
            <person name="Hufnagle W.O."/>
            <person name="Kowalik D.J."/>
            <person name="Lagrou M."/>
            <person name="Garber R.L."/>
            <person name="Goltry L."/>
            <person name="Tolentino E."/>
            <person name="Westbrock-Wadman S."/>
            <person name="Yuan Y."/>
            <person name="Brody L.L."/>
            <person name="Coulter S.N."/>
            <person name="Folger K.R."/>
            <person name="Kas A."/>
            <person name="Larbig K."/>
            <person name="Lim R.M."/>
            <person name="Smith K.A."/>
            <person name="Spencer D.H."/>
            <person name="Wong G.K.-S."/>
            <person name="Wu Z."/>
            <person name="Paulsen I.T."/>
            <person name="Reizer J."/>
            <person name="Saier M.H. Jr."/>
            <person name="Hancock R.E.W."/>
            <person name="Lory S."/>
            <person name="Olson M.V."/>
        </authorList>
    </citation>
    <scope>NUCLEOTIDE SEQUENCE [LARGE SCALE GENOMIC DNA]</scope>
    <source>
        <strain>ATCC 15692 / DSM 22644 / CIP 104116 / JCM 14847 / LMG 12228 / 1C / PRS 101 / PAO1</strain>
    </source>
</reference>
<feature type="signal peptide" evidence="1">
    <location>
        <begin position="1"/>
        <end position="21"/>
    </location>
</feature>
<feature type="chain" id="PRO_0000021786" description="Sigma factor AlgU regulatory protein MucB">
    <location>
        <begin position="22"/>
        <end position="316"/>
    </location>
</feature>
<feature type="helix" evidence="3">
    <location>
        <begin position="24"/>
        <end position="37"/>
    </location>
</feature>
<feature type="strand" evidence="3">
    <location>
        <begin position="40"/>
        <end position="48"/>
    </location>
</feature>
<feature type="strand" evidence="3">
    <location>
        <begin position="51"/>
        <end position="61"/>
    </location>
</feature>
<feature type="strand" evidence="3">
    <location>
        <begin position="67"/>
        <end position="73"/>
    </location>
</feature>
<feature type="strand" evidence="3">
    <location>
        <begin position="75"/>
        <end position="77"/>
    </location>
</feature>
<feature type="strand" evidence="3">
    <location>
        <begin position="80"/>
        <end position="84"/>
    </location>
</feature>
<feature type="strand" evidence="3">
    <location>
        <begin position="87"/>
        <end position="92"/>
    </location>
</feature>
<feature type="helix" evidence="3">
    <location>
        <begin position="93"/>
        <end position="95"/>
    </location>
</feature>
<feature type="turn" evidence="3">
    <location>
        <begin position="96"/>
        <end position="98"/>
    </location>
</feature>
<feature type="helix" evidence="4">
    <location>
        <begin position="101"/>
        <end position="104"/>
    </location>
</feature>
<feature type="helix" evidence="3">
    <location>
        <begin position="115"/>
        <end position="117"/>
    </location>
</feature>
<feature type="strand" evidence="3">
    <location>
        <begin position="119"/>
        <end position="129"/>
    </location>
</feature>
<feature type="strand" evidence="3">
    <location>
        <begin position="132"/>
        <end position="143"/>
    </location>
</feature>
<feature type="strand" evidence="3">
    <location>
        <begin position="148"/>
        <end position="154"/>
    </location>
</feature>
<feature type="turn" evidence="3">
    <location>
        <begin position="155"/>
        <end position="157"/>
    </location>
</feature>
<feature type="strand" evidence="3">
    <location>
        <begin position="160"/>
        <end position="166"/>
    </location>
</feature>
<feature type="strand" evidence="3">
    <location>
        <begin position="172"/>
        <end position="185"/>
    </location>
</feature>
<feature type="helix" evidence="3">
    <location>
        <begin position="189"/>
        <end position="192"/>
    </location>
</feature>
<feature type="strand" evidence="3">
    <location>
        <begin position="198"/>
        <end position="200"/>
    </location>
</feature>
<feature type="strand" evidence="3">
    <location>
        <begin position="213"/>
        <end position="217"/>
    </location>
</feature>
<feature type="strand" evidence="3">
    <location>
        <begin position="224"/>
        <end position="232"/>
    </location>
</feature>
<feature type="strand" evidence="3">
    <location>
        <begin position="234"/>
        <end position="237"/>
    </location>
</feature>
<feature type="strand" evidence="3">
    <location>
        <begin position="239"/>
        <end position="246"/>
    </location>
</feature>
<feature type="strand" evidence="3">
    <location>
        <begin position="251"/>
        <end position="258"/>
    </location>
</feature>
<feature type="strand" evidence="3">
    <location>
        <begin position="267"/>
        <end position="271"/>
    </location>
</feature>
<feature type="strand" evidence="3">
    <location>
        <begin position="274"/>
        <end position="281"/>
    </location>
</feature>
<feature type="strand" evidence="3">
    <location>
        <begin position="288"/>
        <end position="296"/>
    </location>
</feature>
<feature type="helix" evidence="3">
    <location>
        <begin position="298"/>
        <end position="305"/>
    </location>
</feature>
<feature type="strand" evidence="3">
    <location>
        <begin position="308"/>
        <end position="310"/>
    </location>
</feature>
<sequence length="316" mass="34572">MRTTSLLLLLGSLMAVPATQAADASDWLNRLAEADRQNSFQGTFVYERNGSFSTHEIWHRVESDGAVRERLLQLDGARQEVVRVDGRTQCISGGLADQLADAQLWPVRKFDPSQLASWYDLRLVGESRVAGRPAVVLAVTPRDQHRYGFELHLDRDTGLPLKSLLLNEKGQLLERFQFTQLNTGAAPAEDQLQAGAECQVVGPAKADGEKTVAWRSEWLPPGFTLTRSFMRRSPVTPDPVACLTYGDGLARFSVFIEPLHGAMVGDARSQLGPTVVVSKRLQTDDGGQMVTVVGEVPLGTAERVALSIRPEAAAQK</sequence>